<proteinExistence type="inferred from homology"/>
<comment type="function">
    <text evidence="1">Catalyzes the ferrous insertion into protoporphyrin IX.</text>
</comment>
<comment type="catalytic activity">
    <reaction evidence="1">
        <text>heme b + 2 H(+) = protoporphyrin IX + Fe(2+)</text>
        <dbReference type="Rhea" id="RHEA:22584"/>
        <dbReference type="ChEBI" id="CHEBI:15378"/>
        <dbReference type="ChEBI" id="CHEBI:29033"/>
        <dbReference type="ChEBI" id="CHEBI:57306"/>
        <dbReference type="ChEBI" id="CHEBI:60344"/>
        <dbReference type="EC" id="4.98.1.1"/>
    </reaction>
</comment>
<comment type="pathway">
    <text evidence="1">Porphyrin-containing compound metabolism; protoheme biosynthesis; protoheme from protoporphyrin-IX: step 1/1.</text>
</comment>
<comment type="subunit">
    <text evidence="1">Monomer.</text>
</comment>
<comment type="subcellular location">
    <subcellularLocation>
        <location evidence="1">Cytoplasm</location>
    </subcellularLocation>
</comment>
<comment type="similarity">
    <text evidence="1">Belongs to the ferrochelatase family.</text>
</comment>
<accession>B5FLJ9</accession>
<organism>
    <name type="scientific">Salmonella dublin (strain CT_02021853)</name>
    <dbReference type="NCBI Taxonomy" id="439851"/>
    <lineage>
        <taxon>Bacteria</taxon>
        <taxon>Pseudomonadati</taxon>
        <taxon>Pseudomonadota</taxon>
        <taxon>Gammaproteobacteria</taxon>
        <taxon>Enterobacterales</taxon>
        <taxon>Enterobacteriaceae</taxon>
        <taxon>Salmonella</taxon>
    </lineage>
</organism>
<gene>
    <name evidence="1" type="primary">hemH</name>
    <name type="ordered locus">SeD_A0536</name>
</gene>
<reference key="1">
    <citation type="journal article" date="2011" name="J. Bacteriol.">
        <title>Comparative genomics of 28 Salmonella enterica isolates: evidence for CRISPR-mediated adaptive sublineage evolution.</title>
        <authorList>
            <person name="Fricke W.F."/>
            <person name="Mammel M.K."/>
            <person name="McDermott P.F."/>
            <person name="Tartera C."/>
            <person name="White D.G."/>
            <person name="Leclerc J.E."/>
            <person name="Ravel J."/>
            <person name="Cebula T.A."/>
        </authorList>
    </citation>
    <scope>NUCLEOTIDE SEQUENCE [LARGE SCALE GENOMIC DNA]</scope>
    <source>
        <strain>CT_02021853</strain>
    </source>
</reference>
<feature type="chain" id="PRO_1000116074" description="Ferrochelatase">
    <location>
        <begin position="1"/>
        <end position="320"/>
    </location>
</feature>
<feature type="binding site" evidence="1">
    <location>
        <position position="194"/>
    </location>
    <ligand>
        <name>Fe cation</name>
        <dbReference type="ChEBI" id="CHEBI:24875"/>
    </ligand>
</feature>
<feature type="binding site" evidence="1">
    <location>
        <position position="275"/>
    </location>
    <ligand>
        <name>Fe cation</name>
        <dbReference type="ChEBI" id="CHEBI:24875"/>
    </ligand>
</feature>
<name>HEMH_SALDC</name>
<sequence length="320" mass="35944">MRQTKTGILLANLGTPDAPTPEAVKRYLKQFLSDRRVVDTPRLLWWPLLRGVILPLRSPRVAKLYQSIWMDGGSPLMVYSREQQQALAARLPDTPVALGMSYGSPSLESAVDELLASDVDHIVVLPLYPQYSCSTVGAVWDELGRILARKRRIPGISFIRDYADDSAYIDALAKSARESFARHGEPDVLLLSYHGIPQRYADEGDDYPQRCRDTTRELVSALGLPPEKVMMTFQSRFGREPWLTPYTDETLKMLGEKGTGHIQVMCPGFAADCLETLEEIAEQNREIFLEAGGKKYAYIPALNATPEHIDMMLKLTAPYR</sequence>
<evidence type="ECO:0000255" key="1">
    <source>
        <dbReference type="HAMAP-Rule" id="MF_00323"/>
    </source>
</evidence>
<protein>
    <recommendedName>
        <fullName evidence="1">Ferrochelatase</fullName>
        <ecNumber evidence="1">4.98.1.1</ecNumber>
    </recommendedName>
    <alternativeName>
        <fullName evidence="1">Heme synthase</fullName>
    </alternativeName>
    <alternativeName>
        <fullName evidence="1">Protoheme ferro-lyase</fullName>
    </alternativeName>
</protein>
<keyword id="KW-0963">Cytoplasm</keyword>
<keyword id="KW-0350">Heme biosynthesis</keyword>
<keyword id="KW-0408">Iron</keyword>
<keyword id="KW-0456">Lyase</keyword>
<keyword id="KW-0479">Metal-binding</keyword>
<keyword id="KW-0627">Porphyrin biosynthesis</keyword>
<dbReference type="EC" id="4.98.1.1" evidence="1"/>
<dbReference type="EMBL" id="CP001144">
    <property type="protein sequence ID" value="ACH78048.1"/>
    <property type="molecule type" value="Genomic_DNA"/>
</dbReference>
<dbReference type="RefSeq" id="WP_001250083.1">
    <property type="nucleotide sequence ID" value="NC_011205.1"/>
</dbReference>
<dbReference type="SMR" id="B5FLJ9"/>
<dbReference type="KEGG" id="sed:SeD_A0536"/>
<dbReference type="HOGENOM" id="CLU_018884_0_0_6"/>
<dbReference type="UniPathway" id="UPA00252">
    <property type="reaction ID" value="UER00325"/>
</dbReference>
<dbReference type="Proteomes" id="UP000008322">
    <property type="component" value="Chromosome"/>
</dbReference>
<dbReference type="GO" id="GO:0005737">
    <property type="term" value="C:cytoplasm"/>
    <property type="evidence" value="ECO:0007669"/>
    <property type="project" value="UniProtKB-SubCell"/>
</dbReference>
<dbReference type="GO" id="GO:0004325">
    <property type="term" value="F:ferrochelatase activity"/>
    <property type="evidence" value="ECO:0007669"/>
    <property type="project" value="UniProtKB-UniRule"/>
</dbReference>
<dbReference type="GO" id="GO:0046872">
    <property type="term" value="F:metal ion binding"/>
    <property type="evidence" value="ECO:0007669"/>
    <property type="project" value="UniProtKB-KW"/>
</dbReference>
<dbReference type="GO" id="GO:0006783">
    <property type="term" value="P:heme biosynthetic process"/>
    <property type="evidence" value="ECO:0007669"/>
    <property type="project" value="UniProtKB-UniRule"/>
</dbReference>
<dbReference type="CDD" id="cd00419">
    <property type="entry name" value="Ferrochelatase_C"/>
    <property type="match status" value="1"/>
</dbReference>
<dbReference type="CDD" id="cd03411">
    <property type="entry name" value="Ferrochelatase_N"/>
    <property type="match status" value="1"/>
</dbReference>
<dbReference type="FunFam" id="3.40.50.1400:FF:000004">
    <property type="entry name" value="Ferrochelatase"/>
    <property type="match status" value="1"/>
</dbReference>
<dbReference type="Gene3D" id="3.40.50.1400">
    <property type="match status" value="2"/>
</dbReference>
<dbReference type="HAMAP" id="MF_00323">
    <property type="entry name" value="Ferrochelatase"/>
    <property type="match status" value="1"/>
</dbReference>
<dbReference type="InterPro" id="IPR001015">
    <property type="entry name" value="Ferrochelatase"/>
</dbReference>
<dbReference type="InterPro" id="IPR019772">
    <property type="entry name" value="Ferrochelatase_AS"/>
</dbReference>
<dbReference type="InterPro" id="IPR033644">
    <property type="entry name" value="Ferrochelatase_C"/>
</dbReference>
<dbReference type="InterPro" id="IPR033659">
    <property type="entry name" value="Ferrochelatase_N"/>
</dbReference>
<dbReference type="NCBIfam" id="TIGR00109">
    <property type="entry name" value="hemH"/>
    <property type="match status" value="1"/>
</dbReference>
<dbReference type="PANTHER" id="PTHR11108">
    <property type="entry name" value="FERROCHELATASE"/>
    <property type="match status" value="1"/>
</dbReference>
<dbReference type="PANTHER" id="PTHR11108:SF1">
    <property type="entry name" value="FERROCHELATASE, MITOCHONDRIAL"/>
    <property type="match status" value="1"/>
</dbReference>
<dbReference type="Pfam" id="PF00762">
    <property type="entry name" value="Ferrochelatase"/>
    <property type="match status" value="1"/>
</dbReference>
<dbReference type="SUPFAM" id="SSF53800">
    <property type="entry name" value="Chelatase"/>
    <property type="match status" value="1"/>
</dbReference>
<dbReference type="PROSITE" id="PS00534">
    <property type="entry name" value="FERROCHELATASE"/>
    <property type="match status" value="1"/>
</dbReference>